<feature type="signal peptide" evidence="1">
    <location>
        <begin position="1"/>
        <end position="18"/>
    </location>
</feature>
<feature type="chain" id="PRO_0000440509" description="Hemagglutinin" evidence="1">
    <location>
        <begin position="19"/>
        <end position="565"/>
    </location>
</feature>
<feature type="chain" id="PRO_0000038963" description="Hemagglutinin HA1 chain" evidence="1">
    <location>
        <begin position="19"/>
        <end position="341"/>
    </location>
</feature>
<feature type="chain" id="PRO_0000038964" description="Hemagglutinin HA2 chain" evidence="1">
    <location>
        <begin position="343"/>
        <end position="565"/>
    </location>
</feature>
<feature type="topological domain" description="Extracellular" evidence="1">
    <location>
        <begin position="19"/>
        <end position="531"/>
    </location>
</feature>
<feature type="transmembrane region" description="Helical" evidence="1">
    <location>
        <begin position="532"/>
        <end position="552"/>
    </location>
</feature>
<feature type="topological domain" description="Cytoplasmic" evidence="1">
    <location>
        <begin position="553"/>
        <end position="565"/>
    </location>
</feature>
<feature type="site" description="Cleavage; by host" evidence="1">
    <location>
        <begin position="342"/>
        <end position="343"/>
    </location>
</feature>
<feature type="lipid moiety-binding region" description="S-palmitoyl cysteine; by host" evidence="1">
    <location>
        <position position="554"/>
    </location>
</feature>
<feature type="lipid moiety-binding region" description="S-palmitoyl cysteine; by host" evidence="1">
    <location>
        <position position="564"/>
    </location>
</feature>
<feature type="glycosylation site" description="N-linked (GlcNAc...) asparagine; by host" evidence="1">
    <location>
        <position position="29"/>
    </location>
</feature>
<feature type="glycosylation site" description="N-linked (GlcNAc...) asparagine; by host" evidence="1">
    <location>
        <position position="181"/>
    </location>
</feature>
<feature type="glycosylation site" description="N-linked (GlcNAc...) asparagine; by host" evidence="1">
    <location>
        <position position="182"/>
    </location>
</feature>
<feature type="glycosylation site" description="N-linked (GlcNAc...) asparagine; by host" evidence="1">
    <location>
        <position position="304"/>
    </location>
</feature>
<feature type="glycosylation site" description="N-linked (GlcNAc...) asparagine; by host" evidence="1">
    <location>
        <position position="487"/>
    </location>
</feature>
<feature type="glycosylation site" description="N-linked (GlcNAc...) asparagine; by host" evidence="1">
    <location>
        <position position="496"/>
    </location>
</feature>
<feature type="glycosylation site" description="N-linked (GlcNAc...) asparagine; by host" evidence="1">
    <location>
        <position position="500"/>
    </location>
</feature>
<feature type="disulfide bond" description="Interchain (between HA1 and HA2 chains)" evidence="1">
    <location>
        <begin position="22"/>
        <end position="479"/>
    </location>
</feature>
<feature type="disulfide bond" evidence="1">
    <location>
        <begin position="60"/>
        <end position="290"/>
    </location>
</feature>
<feature type="disulfide bond" evidence="1">
    <location>
        <begin position="73"/>
        <end position="85"/>
    </location>
</feature>
<feature type="disulfide bond" evidence="1">
    <location>
        <begin position="108"/>
        <end position="151"/>
    </location>
</feature>
<feature type="disulfide bond" evidence="1">
    <location>
        <begin position="294"/>
        <end position="318"/>
    </location>
</feature>
<feature type="disulfide bond" evidence="1">
    <location>
        <begin position="486"/>
        <end position="490"/>
    </location>
</feature>
<protein>
    <recommendedName>
        <fullName evidence="1">Hemagglutinin</fullName>
    </recommendedName>
    <component>
        <recommendedName>
            <fullName evidence="1">Hemagglutinin HA1 chain</fullName>
        </recommendedName>
    </component>
    <component>
        <recommendedName>
            <fullName evidence="1">Hemagglutinin HA2 chain</fullName>
        </recommendedName>
    </component>
</protein>
<name>HEMA_I84A4</name>
<organismHost>
    <name type="scientific">Aves</name>
    <dbReference type="NCBI Taxonomy" id="8782"/>
</organismHost>
<proteinExistence type="inferred from homology"/>
<sequence length="565" mass="63085">MDIQAVALLILTSTCVQADRICVGYLSTNSSEKVNTLLENDVPVTSSVDLVETSHTGTYCSLDGISPVHLGDCSFEGWIVGNPACASNMGIREWSYLIEDPSAPHGLCYPGELDNNGELRHLFSGIRSFSRTELIAPTSWGAVNDGVSSACQDRGASSFYRNLVWFVERGKQYPVIRGTYNNTTGRDVLVMWGIHHPVSTDEARKLYVNNDPYTLVSTSSWSRKYNLEIGIRPGYNGQKSWMKIYWYLMHPGESISFESNGGLLAPRYGYIIEEYGKGRIFQSRIRIAKCNTKCQTSVGGINTNKTFQNIERNALGDCPKYIKSGQLKLATGLRNVPAISNRGLFGAIAGFIEGGWPGLINGWYGFQHQNEQGVGMAADKESTQKAIDQITTKINNIIEKMNGNYDSIRGEFNQVEQRINMLADRIDDAVTDVWSYNAKLLVLLENDKTLDMHDANVRNLHDQVRRALKTNAIDEGNGCFELLHKCNDSCMETIRNGTYNHTEYEEESKLKRQEIEGIKLKSDDNVYKALSIYSCIASSIVMVGLILAFIMWTCNSGNCRFNICI</sequence>
<comment type="function">
    <text>Binds to sialic acid-containing receptors on the cell surface, bringing about the attachment of the virus particle to the cell. This attachment induces virion internalization of about two third of the virus particles through clathrin-dependent endocytosis and about one third through a clathrin- and caveolin-independent pathway. Plays a major role in the determination of host range restriction and virulence. Class I viral fusion protein. Responsible for penetration of the virus into the cell cytoplasm by mediating the fusion of the membrane of the endocytosed virus particle with the endosomal membrane. Low pH in endosomes induces an irreversible conformational change in HA2, releasing the fusion hydrophobic peptide. Several trimers are required to form a competent fusion pore.</text>
</comment>
<comment type="function">
    <text evidence="1">Binds to sialic acid-containing receptors on the cell surface, bringing about the attachment of the virus particle to the cell. This attachment induces virion internalization either through clathrin-dependent endocytosis or through clathrin- and caveolin-independent pathway. Plays a major role in the determination of host range restriction and virulence. Class I viral fusion protein. Responsible for penetration of the virus into the cell cytoplasm by mediating the fusion of the membrane of the endocytosed virus particle with the endosomal membrane. Low pH in endosomes induces an irreversible conformational change in HA2, releasing the fusion hydrophobic peptide. Several trimers are required to form a competent fusion pore.</text>
</comment>
<comment type="subunit">
    <text evidence="1">Homotrimer of disulfide-linked HA1-HA2.</text>
</comment>
<comment type="subcellular location">
    <subcellularLocation>
        <location evidence="1">Virion membrane</location>
        <topology evidence="1">Single-pass type I membrane protein</topology>
    </subcellularLocation>
    <subcellularLocation>
        <location evidence="1">Host apical cell membrane</location>
        <topology evidence="1">Single-pass type I membrane protein</topology>
    </subcellularLocation>
    <text evidence="1">Targeted to the apical plasma membrane in epithelial polarized cells through a signal present in the transmembrane domain. Associated with glycosphingolipid- and cholesterol-enriched detergent-resistant lipid rafts.</text>
</comment>
<comment type="PTM">
    <text evidence="1">Palmitoylated.</text>
</comment>
<comment type="PTM">
    <text evidence="1">In natural infection, inactive HA is matured into HA1 and HA2 outside the cell by one or more trypsin-like, arginine-specific endoprotease secreted by the bronchial epithelial cells. One identified protease that may be involved in this process is secreted in lungs by club cells.</text>
</comment>
<comment type="miscellaneous">
    <text>Major glycoprotein, comprises over 80% of the envelope proteins present in virus particle.</text>
</comment>
<comment type="miscellaneous">
    <text>The extent of infection into host organism is determined by HA. Influenza viruses bud from the apical surface of polarized epithelial cells (e.g. bronchial epithelial cells) into lumen of lungs and are therefore usually pneumotropic. The reason is that HA is cleaved by tryptase clara which is restricted to lungs. However, HAs of H5 and H7 pantropic avian viruses subtypes can be cleaved by furin and subtilisin-type enzymes, allowing the virus to grow in other organs than lungs.</text>
</comment>
<comment type="miscellaneous">
    <text evidence="2">The influenza A genome consist of 8 RNA segments. Genetic variation of hemagglutinin and/or neuraminidase genes results in the emergence of new influenza strains. The mechanism of variation can be the result of point mutations or the result of genetic reassortment between segments of two different strains.</text>
</comment>
<comment type="similarity">
    <text evidence="1">Belongs to the influenza viruses hemagglutinin family.</text>
</comment>
<reference key="1">
    <citation type="journal article" date="1989" name="Virology">
        <title>Antigenic and molecular characterization of subtype H13 hemagglutinin of influenza virus.</title>
        <authorList>
            <person name="Chambers T.M."/>
            <person name="Yamnikova S."/>
            <person name="Kawaoka Y."/>
            <person name="Lvov D.K."/>
            <person name="Webster R.G."/>
        </authorList>
    </citation>
    <scope>NUCLEOTIDE SEQUENCE [GENOMIC RNA]</scope>
</reference>
<keyword id="KW-1167">Clathrin- and caveolin-independent endocytosis of virus by host</keyword>
<keyword id="KW-1165">Clathrin-mediated endocytosis of virus by host</keyword>
<keyword id="KW-1015">Disulfide bond</keyword>
<keyword id="KW-1170">Fusion of virus membrane with host endosomal membrane</keyword>
<keyword id="KW-1168">Fusion of virus membrane with host membrane</keyword>
<keyword id="KW-0325">Glycoprotein</keyword>
<keyword id="KW-0348">Hemagglutinin</keyword>
<keyword id="KW-1032">Host cell membrane</keyword>
<keyword id="KW-1043">Host membrane</keyword>
<keyword id="KW-0945">Host-virus interaction</keyword>
<keyword id="KW-0449">Lipoprotein</keyword>
<keyword id="KW-0472">Membrane</keyword>
<keyword id="KW-0564">Palmitate</keyword>
<keyword id="KW-0732">Signal</keyword>
<keyword id="KW-0812">Transmembrane</keyword>
<keyword id="KW-1133">Transmembrane helix</keyword>
<keyword id="KW-1161">Viral attachment to host cell</keyword>
<keyword id="KW-0261">Viral envelope protein</keyword>
<keyword id="KW-1162">Viral penetration into host cytoplasm</keyword>
<keyword id="KW-0946">Virion</keyword>
<keyword id="KW-1164">Virus endocytosis by host</keyword>
<keyword id="KW-1160">Virus entry into host cell</keyword>
<organism>
    <name type="scientific">Influenza A virus (strain A/Gull/Astrakhan/227/1984 H13N6)</name>
    <dbReference type="NCBI Taxonomy" id="385603"/>
    <lineage>
        <taxon>Viruses</taxon>
        <taxon>Riboviria</taxon>
        <taxon>Orthornavirae</taxon>
        <taxon>Negarnaviricota</taxon>
        <taxon>Polyploviricotina</taxon>
        <taxon>Insthoviricetes</taxon>
        <taxon>Articulavirales</taxon>
        <taxon>Orthomyxoviridae</taxon>
        <taxon>Alphainfluenzavirus</taxon>
        <taxon>Alphainfluenzavirus influenzae</taxon>
        <taxon>Influenza A virus</taxon>
    </lineage>
</organism>
<gene>
    <name evidence="1" type="primary">HA</name>
</gene>
<accession>P13101</accession>
<dbReference type="EMBL" id="M26089">
    <property type="protein sequence ID" value="AAA43213.1"/>
    <property type="molecule type" value="Genomic_RNA"/>
</dbReference>
<dbReference type="PIR" id="C32664">
    <property type="entry name" value="HMIVT3"/>
</dbReference>
<dbReference type="SMR" id="P13101"/>
<dbReference type="GlyCosmos" id="P13101">
    <property type="glycosylation" value="7 sites, No reported glycans"/>
</dbReference>
<dbReference type="GO" id="GO:0020002">
    <property type="term" value="C:host cell plasma membrane"/>
    <property type="evidence" value="ECO:0007669"/>
    <property type="project" value="UniProtKB-SubCell"/>
</dbReference>
<dbReference type="GO" id="GO:0016020">
    <property type="term" value="C:membrane"/>
    <property type="evidence" value="ECO:0007669"/>
    <property type="project" value="UniProtKB-UniRule"/>
</dbReference>
<dbReference type="GO" id="GO:0019031">
    <property type="term" value="C:viral envelope"/>
    <property type="evidence" value="ECO:0007669"/>
    <property type="project" value="UniProtKB-UniRule"/>
</dbReference>
<dbReference type="GO" id="GO:0055036">
    <property type="term" value="C:virion membrane"/>
    <property type="evidence" value="ECO:0007669"/>
    <property type="project" value="UniProtKB-SubCell"/>
</dbReference>
<dbReference type="GO" id="GO:0046789">
    <property type="term" value="F:host cell surface receptor binding"/>
    <property type="evidence" value="ECO:0007669"/>
    <property type="project" value="UniProtKB-UniRule"/>
</dbReference>
<dbReference type="GO" id="GO:0075512">
    <property type="term" value="P:clathrin-dependent endocytosis of virus by host cell"/>
    <property type="evidence" value="ECO:0007669"/>
    <property type="project" value="UniProtKB-UniRule"/>
</dbReference>
<dbReference type="GO" id="GO:0039654">
    <property type="term" value="P:fusion of virus membrane with host endosome membrane"/>
    <property type="evidence" value="ECO:0007669"/>
    <property type="project" value="UniProtKB-UniRule"/>
</dbReference>
<dbReference type="GO" id="GO:0019064">
    <property type="term" value="P:fusion of virus membrane with host plasma membrane"/>
    <property type="evidence" value="ECO:0007669"/>
    <property type="project" value="InterPro"/>
</dbReference>
<dbReference type="GO" id="GO:0046761">
    <property type="term" value="P:viral budding from plasma membrane"/>
    <property type="evidence" value="ECO:0007669"/>
    <property type="project" value="UniProtKB-UniRule"/>
</dbReference>
<dbReference type="GO" id="GO:0019062">
    <property type="term" value="P:virion attachment to host cell"/>
    <property type="evidence" value="ECO:0007669"/>
    <property type="project" value="UniProtKB-KW"/>
</dbReference>
<dbReference type="Gene3D" id="3.90.20.10">
    <property type="match status" value="1"/>
</dbReference>
<dbReference type="Gene3D" id="3.90.209.20">
    <property type="match status" value="1"/>
</dbReference>
<dbReference type="HAMAP" id="MF_04072">
    <property type="entry name" value="INFV_HEMA"/>
    <property type="match status" value="1"/>
</dbReference>
<dbReference type="InterPro" id="IPR008980">
    <property type="entry name" value="Capsid_hemagglutn"/>
</dbReference>
<dbReference type="InterPro" id="IPR013828">
    <property type="entry name" value="Hemagglutn_HA1_a/b_dom_sf"/>
</dbReference>
<dbReference type="InterPro" id="IPR000149">
    <property type="entry name" value="Hemagglutn_influenz_A"/>
</dbReference>
<dbReference type="InterPro" id="IPR001364">
    <property type="entry name" value="Hemagglutn_influenz_A/B"/>
</dbReference>
<dbReference type="Pfam" id="PF00509">
    <property type="entry name" value="Hemagglutinin"/>
    <property type="match status" value="1"/>
</dbReference>
<dbReference type="PRINTS" id="PR00330">
    <property type="entry name" value="HEMAGGLUTN1"/>
</dbReference>
<dbReference type="PRINTS" id="PR00329">
    <property type="entry name" value="HEMAGGLUTN12"/>
</dbReference>
<dbReference type="SUPFAM" id="SSF58064">
    <property type="entry name" value="Influenza hemagglutinin (stalk)"/>
    <property type="match status" value="1"/>
</dbReference>
<dbReference type="SUPFAM" id="SSF49818">
    <property type="entry name" value="Viral protein domain"/>
    <property type="match status" value="1"/>
</dbReference>
<evidence type="ECO:0000255" key="1">
    <source>
        <dbReference type="HAMAP-Rule" id="MF_04072"/>
    </source>
</evidence>
<evidence type="ECO:0000305" key="2"/>